<protein>
    <recommendedName>
        <fullName evidence="1">Protein X</fullName>
    </recommendedName>
    <alternativeName>
        <fullName evidence="1">HBx</fullName>
    </alternativeName>
    <alternativeName>
        <fullName evidence="1">Peptide X</fullName>
    </alternativeName>
    <alternativeName>
        <fullName evidence="1">pX</fullName>
    </alternativeName>
</protein>
<sequence length="154" mass="16643">MAARMCCQLDPARDVLCLRPVGAESRGRPVSGPFGPLPSPSSSAVPADHGAHLSLRGLPVCAFSSAGPCALRFTSARRMETTVNAHQVLPKVLYKRTLGLSAMSTTDLEAYFKDCLFKDWEELGEEIRLMIFVLGGCRHKLVCSPAPCNFFTSA</sequence>
<name>X_HBVC2</name>
<organismHost>
    <name type="scientific">Homo sapiens</name>
    <name type="common">Human</name>
    <dbReference type="NCBI Taxonomy" id="9606"/>
</organismHost>
<organismHost>
    <name type="scientific">Pan troglodytes</name>
    <name type="common">Chimpanzee</name>
    <dbReference type="NCBI Taxonomy" id="9598"/>
</organismHost>
<evidence type="ECO:0000255" key="1">
    <source>
        <dbReference type="HAMAP-Rule" id="MF_04074"/>
    </source>
</evidence>
<accession>Q9YZR6</accession>
<organism>
    <name type="scientific">Hepatitis B virus genotype C subtype ar (isolate Japan/S-207/1988)</name>
    <name type="common">HBV-C</name>
    <dbReference type="NCBI Taxonomy" id="489467"/>
    <lineage>
        <taxon>Viruses</taxon>
        <taxon>Riboviria</taxon>
        <taxon>Pararnavirae</taxon>
        <taxon>Artverviricota</taxon>
        <taxon>Revtraviricetes</taxon>
        <taxon>Blubervirales</taxon>
        <taxon>Hepadnaviridae</taxon>
        <taxon>Orthohepadnavirus</taxon>
        <taxon>Hepatitis B virus</taxon>
        <taxon>hepatitis B virus genotype C</taxon>
    </lineage>
</organism>
<keyword id="KW-1074">Activation of host NF-kappa-B by virus</keyword>
<keyword id="KW-0010">Activator</keyword>
<keyword id="KW-0053">Apoptosis</keyword>
<keyword id="KW-1035">Host cytoplasm</keyword>
<keyword id="KW-1079">Host G2/M cell cycle arrest by virus</keyword>
<keyword id="KW-1045">Host mitochondrion</keyword>
<keyword id="KW-1048">Host nucleus</keyword>
<keyword id="KW-0945">Host-virus interaction</keyword>
<keyword id="KW-1121">Modulation of host cell cycle by virus</keyword>
<keyword id="KW-0804">Transcription</keyword>
<keyword id="KW-0805">Transcription regulation</keyword>
<gene>
    <name evidence="1" type="primary">X</name>
</gene>
<reference key="1">
    <citation type="journal article" date="1998" name="Arch. Virol.">
        <title>Hepatitis B virus genomic sequence in the circulation of hepatocellular carcinoma patients: comparative analysis of 40 full-length isolates.</title>
        <authorList>
            <person name="Takahashi K."/>
            <person name="Akahane Y."/>
            <person name="Hino K."/>
            <person name="Ohta Y."/>
            <person name="Mishiro S."/>
        </authorList>
    </citation>
    <scope>NUCLEOTIDE SEQUENCE [GENOMIC DNA]</scope>
</reference>
<reference key="2">
    <citation type="journal article" date="2004" name="J. Virol.">
        <title>The enigmatic X gene of hepatitis B virus.</title>
        <authorList>
            <person name="Bouchard M.J."/>
            <person name="Schneider R.J."/>
        </authorList>
    </citation>
    <scope>REVIEW</scope>
</reference>
<reference key="3">
    <citation type="journal article" date="2006" name="Cancer Sci.">
        <title>Molecular functions and biological roles of hepatitis B virus x protein.</title>
        <authorList>
            <person name="Tang H."/>
            <person name="Oishi N."/>
            <person name="Kaneko S."/>
            <person name="Murakami S."/>
        </authorList>
    </citation>
    <scope>REVIEW</scope>
</reference>
<dbReference type="EMBL" id="AB014394">
    <property type="protein sequence ID" value="BAA32955.2"/>
    <property type="molecule type" value="Genomic_DNA"/>
</dbReference>
<dbReference type="SMR" id="Q9YZR6"/>
<dbReference type="Proteomes" id="UP000007922">
    <property type="component" value="Genome"/>
</dbReference>
<dbReference type="GO" id="GO:0033650">
    <property type="term" value="C:host cell mitochondrion"/>
    <property type="evidence" value="ECO:0007669"/>
    <property type="project" value="UniProtKB-SubCell"/>
</dbReference>
<dbReference type="GO" id="GO:0042025">
    <property type="term" value="C:host cell nucleus"/>
    <property type="evidence" value="ECO:0007669"/>
    <property type="project" value="UniProtKB-SubCell"/>
</dbReference>
<dbReference type="GO" id="GO:0006351">
    <property type="term" value="P:DNA-templated transcription"/>
    <property type="evidence" value="ECO:0007669"/>
    <property type="project" value="UniProtKB-UniRule"/>
</dbReference>
<dbReference type="GO" id="GO:0085033">
    <property type="term" value="P:symbiont-mediated activation of host NF-kappaB cascade"/>
    <property type="evidence" value="ECO:0007669"/>
    <property type="project" value="UniProtKB-UniRule"/>
</dbReference>
<dbReference type="GO" id="GO:0039592">
    <property type="term" value="P:symbiont-mediated arrest of host cell cycle during G2/M transition"/>
    <property type="evidence" value="ECO:0007669"/>
    <property type="project" value="UniProtKB-UniRule"/>
</dbReference>
<dbReference type="GO" id="GO:0019079">
    <property type="term" value="P:viral genome replication"/>
    <property type="evidence" value="ECO:0007669"/>
    <property type="project" value="UniProtKB-UniRule"/>
</dbReference>
<dbReference type="HAMAP" id="MF_04074">
    <property type="entry name" value="HBV_X"/>
    <property type="match status" value="1"/>
</dbReference>
<dbReference type="InterPro" id="IPR000236">
    <property type="entry name" value="Transactivation_prot_X"/>
</dbReference>
<dbReference type="Pfam" id="PF00739">
    <property type="entry name" value="X"/>
    <property type="match status" value="1"/>
</dbReference>
<comment type="function">
    <text evidence="1">Multifunctional protein that plays a role in silencing host antiviral defenses and promoting viral transcription. Does not seem to be essential for HBV infection. May be directly involved in development of cirrhosis and liver cancer (hepatocellular carcinoma). Most of cytosolic activities involve modulation of cytosolic calcium. The effect on apoptosis is controversial depending on the cell types in which the studies have been conducted. May induce apoptosis by localizing in mitochondria and causing loss of mitochondrial membrane potential. May also modulate apoptosis by binding host CFLAR, a key regulator of the death-inducing signaling complex (DISC). Promotes viral transcription by using the host E3 ubiquitin ligase DDB1 to target the SMC5-SMC6 complex to proteasomal degradation. This host complex would otherwise bind to viral episomal DNA, and prevents its transcription. Moderately stimulates transcription of many different viral and cellular transcription elements. Promoters and enhancers stimulated by HBx contain DNA binding sites for NF-kappa-B, AP-1, AP-2, c-EBP, ATF/CREB, or the calcium-activated factor NF-AT.</text>
</comment>
<comment type="subunit">
    <text evidence="1">May form homodimer. May interact with host CEBPA, CFLAR, CREB1, DDB1, E4F1, HBXIP, HSPD1/HSP60, NFKBIA, POLR2E and SMAD4. Interacts with host SMC5-SMC6 complex and induces its degradation. Interacts with host TRPC4AP; leading to prevent ubiquitination of TRPC4AP. Interacts with host PLSCR1; this interaction promotes ubiquitination and degradation of HBx and impairs HBx-mediated cell proliferation.</text>
</comment>
<comment type="subcellular location">
    <subcellularLocation>
        <location evidence="1">Host cytoplasm</location>
    </subcellularLocation>
    <subcellularLocation>
        <location evidence="1">Host nucleus</location>
    </subcellularLocation>
    <subcellularLocation>
        <location evidence="1">Host mitochondrion</location>
    </subcellularLocation>
    <text evidence="1">Mainly cytoplasmic as only a fraction is detected in the nucleus. In cytoplasm, a minor fraction associates with mitochondria or proteasomes.</text>
</comment>
<comment type="PTM">
    <text evidence="1">A fraction may be phosphorylated in insect cells and HepG2 cells, a human hepatoblastoma cell line. Phosphorylated in vitro by host protein kinase C or mitogen-activated protein kinase. N-acetylated in insect cells.</text>
</comment>
<comment type="similarity">
    <text evidence="1">Belongs to the orthohepadnavirus protein X family.</text>
</comment>
<comment type="caution">
    <text>Transcriptional activities should be taken with a grain of salt. As of 2007, all studies demonstrating in vivo interaction between protein X and transcriptional components were performed with significant overexpression of both proteins and in the absence of viral infection.</text>
</comment>
<feature type="chain" id="PRO_0000319906" description="Protein X">
    <location>
        <begin position="1"/>
        <end position="154"/>
    </location>
</feature>
<feature type="region of interest" description="Mitochondrial targeting sequence" evidence="1">
    <location>
        <begin position="68"/>
        <end position="117"/>
    </location>
</feature>
<proteinExistence type="inferred from homology"/>